<name>EQXG_GIBF5</name>
<proteinExistence type="evidence at transcript level"/>
<evidence type="ECO:0000255" key="1"/>
<evidence type="ECO:0000255" key="2">
    <source>
        <dbReference type="PROSITE-ProRule" id="PRU00498"/>
    </source>
</evidence>
<evidence type="ECO:0000256" key="3">
    <source>
        <dbReference type="SAM" id="MobiDB-lite"/>
    </source>
</evidence>
<evidence type="ECO:0000269" key="4">
    <source>
    </source>
</evidence>
<evidence type="ECO:0000303" key="5">
    <source>
    </source>
</evidence>
<evidence type="ECO:0000305" key="6"/>
<sequence>MSTTPQMSQSGFQDDQLEAGAREDVGTEAQEKPLSTTGTMVDEPQPNPNVVDWDGPDDPQHPLNWSKAQKNLHVGIVSLSTLAANLAATMFAPGAAELSDEFNITSATVTAMTVSLYVLGFALGPLLLAPLSELYGRLIIYHFCNMVYMAFTIGCAFSTNVAMFLVFRIIAGCAASGPMSIGGGTVADLFVQEQRGKAMALFAVGPLLGPVIGPIIGGFVSENVGWRWTFRILLILSGILATVTFALMKETNYTVILQKKALRMRKETGNEKLVAKSSRDETAGQMLARAIVRPLKLLIFSPIVLLVSLYTGILFGLIFLLFTTFPSVFQDVDKLLGSKKGEENAAPRPEDRLLLMKWLGPITPLGLFIYGWTAENRVHWIVPIIGTFIVGFGSLFVVIPGQIYLVDAFGAEAAASAMAANLLVRSPFGAFLDLTAEPLYSKLGLGWGNSVLGFITLAFTPVPWIFYTYGERLRTHFQVDL</sequence>
<comment type="function">
    <text evidence="4">Efflux pump required for efficient secretion of trichosetin or other secondary metabolies produced by the trichosetin gene cluster (PubMed:28379186). Plays a crucial role in detoxification of the toxic trichosetin in Gibberella fujikuroi cells (PubMed:28379186).</text>
</comment>
<comment type="subcellular location">
    <subcellularLocation>
        <location evidence="6">Cell membrane</location>
        <topology evidence="1">Multi-pass membrane protein</topology>
    </subcellularLocation>
</comment>
<comment type="induction">
    <text evidence="4">Expression is induced by the final product trichosetin and not by the trichosetin cluster-specific transcription acticator TF22 (PubMed:28379186).</text>
</comment>
<comment type="disruption phenotype">
    <text evidence="4">Resulted in the down-regulation of the three biosynthetic genes from the trisetin cluster and a reduced accumulation of trichosetin (PubMed:28379186).</text>
</comment>
<comment type="similarity">
    <text evidence="6">Belongs to the major facilitator superfamily.</text>
</comment>
<dbReference type="EMBL" id="HF679025">
    <property type="protein sequence ID" value="CCT65291.1"/>
    <property type="molecule type" value="Genomic_DNA"/>
</dbReference>
<dbReference type="STRING" id="1279085.S0DS64"/>
<dbReference type="GlyCosmos" id="S0DS64">
    <property type="glycosylation" value="3 sites, No reported glycans"/>
</dbReference>
<dbReference type="EnsemblFungi" id="CCT65291">
    <property type="protein sequence ID" value="CCT65291"/>
    <property type="gene ID" value="FFUJ_02224"/>
</dbReference>
<dbReference type="VEuPathDB" id="FungiDB:FFUJ_02224"/>
<dbReference type="HOGENOM" id="CLU_008455_1_1_1"/>
<dbReference type="Proteomes" id="UP000016800">
    <property type="component" value="Chromosome 3"/>
</dbReference>
<dbReference type="GO" id="GO:0005886">
    <property type="term" value="C:plasma membrane"/>
    <property type="evidence" value="ECO:0007669"/>
    <property type="project" value="UniProtKB-SubCell"/>
</dbReference>
<dbReference type="GO" id="GO:0022857">
    <property type="term" value="F:transmembrane transporter activity"/>
    <property type="evidence" value="ECO:0007669"/>
    <property type="project" value="InterPro"/>
</dbReference>
<dbReference type="CDD" id="cd17323">
    <property type="entry name" value="MFS_Tpo1_MDR_like"/>
    <property type="match status" value="1"/>
</dbReference>
<dbReference type="FunFam" id="1.20.1250.20:FF:000011">
    <property type="entry name" value="MFS multidrug transporter, putative"/>
    <property type="match status" value="1"/>
</dbReference>
<dbReference type="Gene3D" id="1.20.1250.20">
    <property type="entry name" value="MFS general substrate transporter like domains"/>
    <property type="match status" value="1"/>
</dbReference>
<dbReference type="InterPro" id="IPR011701">
    <property type="entry name" value="MFS"/>
</dbReference>
<dbReference type="InterPro" id="IPR020846">
    <property type="entry name" value="MFS_dom"/>
</dbReference>
<dbReference type="InterPro" id="IPR036259">
    <property type="entry name" value="MFS_trans_sf"/>
</dbReference>
<dbReference type="PANTHER" id="PTHR23502">
    <property type="entry name" value="MAJOR FACILITATOR SUPERFAMILY"/>
    <property type="match status" value="1"/>
</dbReference>
<dbReference type="PANTHER" id="PTHR23502:SF135">
    <property type="entry name" value="MAJOR FACILITATOR SUPERFAMILY (MFS) PROFILE DOMAIN-CONTAINING PROTEIN-RELATED"/>
    <property type="match status" value="1"/>
</dbReference>
<dbReference type="Pfam" id="PF07690">
    <property type="entry name" value="MFS_1"/>
    <property type="match status" value="1"/>
</dbReference>
<dbReference type="SUPFAM" id="SSF103473">
    <property type="entry name" value="MFS general substrate transporter"/>
    <property type="match status" value="1"/>
</dbReference>
<dbReference type="PROSITE" id="PS50850">
    <property type="entry name" value="MFS"/>
    <property type="match status" value="1"/>
</dbReference>
<accession>S0DS64</accession>
<protein>
    <recommendedName>
        <fullName evidence="5">Trichosetin biosynthesis cluster MFS transporter</fullName>
        <shortName evidence="5">MFS-T</shortName>
    </recommendedName>
</protein>
<reference key="1">
    <citation type="journal article" date="2013" name="PLoS Pathog.">
        <title>Deciphering the cryptic genome: genome-wide analyses of the rice pathogen Fusarium fujikuroi reveal complex regulation of secondary metabolism and novel metabolites.</title>
        <authorList>
            <person name="Wiemann P."/>
            <person name="Sieber C.M.K."/>
            <person name="von Bargen K.W."/>
            <person name="Studt L."/>
            <person name="Niehaus E.-M."/>
            <person name="Espino J.J."/>
            <person name="Huss K."/>
            <person name="Michielse C.B."/>
            <person name="Albermann S."/>
            <person name="Wagner D."/>
            <person name="Bergner S.V."/>
            <person name="Connolly L.R."/>
            <person name="Fischer A."/>
            <person name="Reuter G."/>
            <person name="Kleigrewe K."/>
            <person name="Bald T."/>
            <person name="Wingfield B.D."/>
            <person name="Ophir R."/>
            <person name="Freeman S."/>
            <person name="Hippler M."/>
            <person name="Smith K.M."/>
            <person name="Brown D.W."/>
            <person name="Proctor R.H."/>
            <person name="Muensterkoetter M."/>
            <person name="Freitag M."/>
            <person name="Humpf H.-U."/>
            <person name="Gueldener U."/>
            <person name="Tudzynski B."/>
        </authorList>
    </citation>
    <scope>NUCLEOTIDE SEQUENCE [LARGE SCALE GENOMIC DNA]</scope>
    <source>
        <strain>CBS 195.34 / IMI 58289 / NRRL A-6831</strain>
    </source>
</reference>
<reference key="2">
    <citation type="journal article" date="2017" name="Toxins">
        <title>Establishment of the inducible Tet-On system for the activation of the silent trichosetin gene cluster in Fusarium fujikuroi.</title>
        <authorList>
            <person name="Janevska S."/>
            <person name="Arndt B."/>
            <person name="Baumann L."/>
            <person name="Apken L.H."/>
            <person name="Mauriz Marques L.M."/>
            <person name="Humpf H.U."/>
            <person name="Tudzynski B."/>
        </authorList>
    </citation>
    <scope>FUNCTION</scope>
    <scope>INDUCTION</scope>
    <scope>DISRUPTION PHENOTYPE</scope>
</reference>
<keyword id="KW-1003">Cell membrane</keyword>
<keyword id="KW-0325">Glycoprotein</keyword>
<keyword id="KW-0472">Membrane</keyword>
<keyword id="KW-1185">Reference proteome</keyword>
<keyword id="KW-0812">Transmembrane</keyword>
<keyword id="KW-1133">Transmembrane helix</keyword>
<keyword id="KW-0813">Transport</keyword>
<organism>
    <name type="scientific">Gibberella fujikuroi (strain CBS 195.34 / IMI 58289 / NRRL A-6831)</name>
    <name type="common">Bakanae and foot rot disease fungus</name>
    <name type="synonym">Fusarium fujikuroi</name>
    <dbReference type="NCBI Taxonomy" id="1279085"/>
    <lineage>
        <taxon>Eukaryota</taxon>
        <taxon>Fungi</taxon>
        <taxon>Dikarya</taxon>
        <taxon>Ascomycota</taxon>
        <taxon>Pezizomycotina</taxon>
        <taxon>Sordariomycetes</taxon>
        <taxon>Hypocreomycetidae</taxon>
        <taxon>Hypocreales</taxon>
        <taxon>Nectriaceae</taxon>
        <taxon>Fusarium</taxon>
        <taxon>Fusarium fujikuroi species complex</taxon>
    </lineage>
</organism>
<feature type="chain" id="PRO_0000443992" description="Trichosetin biosynthesis cluster MFS transporter">
    <location>
        <begin position="1"/>
        <end position="481"/>
    </location>
</feature>
<feature type="transmembrane region" description="Helical" evidence="1">
    <location>
        <begin position="72"/>
        <end position="92"/>
    </location>
</feature>
<feature type="transmembrane region" description="Helical" evidence="1">
    <location>
        <begin position="111"/>
        <end position="131"/>
    </location>
</feature>
<feature type="transmembrane region" description="Helical" evidence="1">
    <location>
        <begin position="147"/>
        <end position="167"/>
    </location>
</feature>
<feature type="transmembrane region" description="Helical" evidence="1">
    <location>
        <begin position="169"/>
        <end position="189"/>
    </location>
</feature>
<feature type="transmembrane region" description="Helical" evidence="1">
    <location>
        <begin position="200"/>
        <end position="220"/>
    </location>
</feature>
<feature type="transmembrane region" description="Helical" evidence="1">
    <location>
        <begin position="228"/>
        <end position="248"/>
    </location>
</feature>
<feature type="transmembrane region" description="Helical" evidence="1">
    <location>
        <begin position="302"/>
        <end position="322"/>
    </location>
</feature>
<feature type="transmembrane region" description="Helical" evidence="1">
    <location>
        <begin position="353"/>
        <end position="373"/>
    </location>
</feature>
<feature type="transmembrane region" description="Helical" evidence="1">
    <location>
        <begin position="380"/>
        <end position="400"/>
    </location>
</feature>
<feature type="transmembrane region" description="Helical" evidence="1">
    <location>
        <begin position="403"/>
        <end position="423"/>
    </location>
</feature>
<feature type="transmembrane region" description="Helical" evidence="1">
    <location>
        <begin position="446"/>
        <end position="466"/>
    </location>
</feature>
<feature type="region of interest" description="Disordered" evidence="3">
    <location>
        <begin position="1"/>
        <end position="63"/>
    </location>
</feature>
<feature type="compositionally biased region" description="Polar residues" evidence="3">
    <location>
        <begin position="1"/>
        <end position="13"/>
    </location>
</feature>
<feature type="compositionally biased region" description="Basic and acidic residues" evidence="3">
    <location>
        <begin position="20"/>
        <end position="31"/>
    </location>
</feature>
<feature type="glycosylation site" description="N-linked (GlcNAc...) asparagine" evidence="2">
    <location>
        <position position="64"/>
    </location>
</feature>
<feature type="glycosylation site" description="N-linked (GlcNAc...) asparagine" evidence="2">
    <location>
        <position position="103"/>
    </location>
</feature>
<feature type="glycosylation site" description="N-linked (GlcNAc...) asparagine" evidence="2">
    <location>
        <position position="252"/>
    </location>
</feature>
<gene>
    <name evidence="5" type="primary">MFS-T</name>
    <name type="ORF">FFUJ_02224</name>
</gene>